<keyword id="KW-0009">Actin-binding</keyword>
<keyword id="KW-0965">Cell junction</keyword>
<keyword id="KW-0963">Cytoplasm</keyword>
<keyword id="KW-0206">Cytoskeleton</keyword>
<keyword id="KW-0325">Glycoprotein</keyword>
<keyword id="KW-0378">Hydrolase</keyword>
<keyword id="KW-0479">Metal-binding</keyword>
<keyword id="KW-0597">Phosphoprotein</keyword>
<keyword id="KW-0904">Protein phosphatase</keyword>
<keyword id="KW-1185">Reference proteome</keyword>
<keyword id="KW-0727">SH2 domain</keyword>
<keyword id="KW-0862">Zinc</keyword>
<keyword id="KW-0863">Zinc-finger</keyword>
<dbReference type="EC" id="3.1.3.-" evidence="9"/>
<dbReference type="CCDS" id="CCDS78614.1"/>
<dbReference type="RefSeq" id="NP_082160.3">
    <property type="nucleotide sequence ID" value="NM_027884.3"/>
</dbReference>
<dbReference type="SMR" id="E9Q0S6"/>
<dbReference type="FunCoup" id="E9Q0S6">
    <property type="interactions" value="250"/>
</dbReference>
<dbReference type="IntAct" id="E9Q0S6">
    <property type="interactions" value="4"/>
</dbReference>
<dbReference type="STRING" id="10090.ENSMUSP00000127715"/>
<dbReference type="GlyGen" id="E9Q0S6">
    <property type="glycosylation" value="10 sites, 4 N-linked glycans (4 sites), 1 O-linked glycan (1 site)"/>
</dbReference>
<dbReference type="iPTMnet" id="E9Q0S6"/>
<dbReference type="PhosphoSitePlus" id="E9Q0S6"/>
<dbReference type="SwissPalm" id="E9Q0S6"/>
<dbReference type="jPOST" id="E9Q0S6"/>
<dbReference type="PaxDb" id="10090-ENSMUSP00000127715"/>
<dbReference type="PeptideAtlas" id="E9Q0S6"/>
<dbReference type="ProteomicsDB" id="312431"/>
<dbReference type="Antibodypedia" id="4366">
    <property type="antibodies" value="224 antibodies from 34 providers"/>
</dbReference>
<dbReference type="DNASU" id="21961"/>
<dbReference type="Ensembl" id="ENSMUST00000169786.8">
    <property type="protein sequence ID" value="ENSMUSP00000127715.2"/>
    <property type="gene ID" value="ENSMUSG00000055322.17"/>
</dbReference>
<dbReference type="GeneID" id="21961"/>
<dbReference type="KEGG" id="mmu:21961"/>
<dbReference type="UCSC" id="uc011wmx.2">
    <property type="organism name" value="mouse"/>
</dbReference>
<dbReference type="AGR" id="MGI:104552"/>
<dbReference type="CTD" id="7145"/>
<dbReference type="MGI" id="MGI:104552">
    <property type="gene designation" value="Tns1"/>
</dbReference>
<dbReference type="VEuPathDB" id="HostDB:ENSMUSG00000055322"/>
<dbReference type="eggNOG" id="KOG1930">
    <property type="taxonomic scope" value="Eukaryota"/>
</dbReference>
<dbReference type="eggNOG" id="KOG2283">
    <property type="taxonomic scope" value="Eukaryota"/>
</dbReference>
<dbReference type="GeneTree" id="ENSGT00940000155400"/>
<dbReference type="InParanoid" id="E9Q0S6"/>
<dbReference type="OMA" id="RYKQADN"/>
<dbReference type="OrthoDB" id="6273691at2759"/>
<dbReference type="PhylomeDB" id="E9Q0S6"/>
<dbReference type="TreeFam" id="TF315996"/>
<dbReference type="BioGRID-ORCS" id="21961">
    <property type="hits" value="2 hits in 76 CRISPR screens"/>
</dbReference>
<dbReference type="ChiTaRS" id="Tns1">
    <property type="organism name" value="mouse"/>
</dbReference>
<dbReference type="PRO" id="PR:E9Q0S6"/>
<dbReference type="Proteomes" id="UP000000589">
    <property type="component" value="Chromosome 1"/>
</dbReference>
<dbReference type="RNAct" id="E9Q0S6">
    <property type="molecule type" value="protein"/>
</dbReference>
<dbReference type="Bgee" id="ENSMUSG00000055322">
    <property type="expression patterns" value="Expressed in ascending aorta and 237 other cell types or tissues"/>
</dbReference>
<dbReference type="ExpressionAtlas" id="E9Q0S6">
    <property type="expression patterns" value="baseline and differential"/>
</dbReference>
<dbReference type="GO" id="GO:0009986">
    <property type="term" value="C:cell surface"/>
    <property type="evidence" value="ECO:0007669"/>
    <property type="project" value="UniProtKB-SubCell"/>
</dbReference>
<dbReference type="GO" id="GO:0030055">
    <property type="term" value="C:cell-substrate junction"/>
    <property type="evidence" value="ECO:0000314"/>
    <property type="project" value="MGI"/>
</dbReference>
<dbReference type="GO" id="GO:0005737">
    <property type="term" value="C:cytoplasm"/>
    <property type="evidence" value="ECO:0007669"/>
    <property type="project" value="UniProtKB-KW"/>
</dbReference>
<dbReference type="GO" id="GO:0005856">
    <property type="term" value="C:cytoskeleton"/>
    <property type="evidence" value="ECO:0007669"/>
    <property type="project" value="UniProtKB-SubCell"/>
</dbReference>
<dbReference type="GO" id="GO:0005925">
    <property type="term" value="C:focal adhesion"/>
    <property type="evidence" value="ECO:0000314"/>
    <property type="project" value="MGI"/>
</dbReference>
<dbReference type="GO" id="GO:0003779">
    <property type="term" value="F:actin binding"/>
    <property type="evidence" value="ECO:0000304"/>
    <property type="project" value="MGI"/>
</dbReference>
<dbReference type="GO" id="GO:0004721">
    <property type="term" value="F:phosphoprotein phosphatase activity"/>
    <property type="evidence" value="ECO:0007669"/>
    <property type="project" value="UniProtKB-KW"/>
</dbReference>
<dbReference type="GO" id="GO:0008270">
    <property type="term" value="F:zinc ion binding"/>
    <property type="evidence" value="ECO:0007669"/>
    <property type="project" value="UniProtKB-KW"/>
</dbReference>
<dbReference type="GO" id="GO:0007044">
    <property type="term" value="P:cell-substrate junction assembly"/>
    <property type="evidence" value="ECO:0000315"/>
    <property type="project" value="MGI"/>
</dbReference>
<dbReference type="GO" id="GO:0010761">
    <property type="term" value="P:fibroblast migration"/>
    <property type="evidence" value="ECO:0000315"/>
    <property type="project" value="MGI"/>
</dbReference>
<dbReference type="CDD" id="cd01213">
    <property type="entry name" value="PTB_tensin"/>
    <property type="match status" value="1"/>
</dbReference>
<dbReference type="CDD" id="cd09927">
    <property type="entry name" value="SH2_Tensin_like"/>
    <property type="match status" value="1"/>
</dbReference>
<dbReference type="FunFam" id="2.30.29.30:FF:000039">
    <property type="entry name" value="Tensin 1"/>
    <property type="match status" value="1"/>
</dbReference>
<dbReference type="FunFam" id="3.30.505.10:FF:000002">
    <property type="entry name" value="Tensin 1"/>
    <property type="match status" value="1"/>
</dbReference>
<dbReference type="FunFam" id="3.30.60.20:FF:000065">
    <property type="entry name" value="Tensin 1"/>
    <property type="match status" value="1"/>
</dbReference>
<dbReference type="FunFam" id="2.60.40.1110:FF:000002">
    <property type="entry name" value="tensin-1 isoform X2"/>
    <property type="match status" value="1"/>
</dbReference>
<dbReference type="FunFam" id="3.90.190.10:FF:000010">
    <property type="entry name" value="tensin-1 isoform X2"/>
    <property type="match status" value="1"/>
</dbReference>
<dbReference type="Gene3D" id="2.60.40.1110">
    <property type="match status" value="1"/>
</dbReference>
<dbReference type="Gene3D" id="3.30.60.20">
    <property type="match status" value="1"/>
</dbReference>
<dbReference type="Gene3D" id="2.30.29.30">
    <property type="entry name" value="Pleckstrin-homology domain (PH domain)/Phosphotyrosine-binding domain (PTB)"/>
    <property type="match status" value="1"/>
</dbReference>
<dbReference type="Gene3D" id="3.90.190.10">
    <property type="entry name" value="Protein tyrosine phosphatase superfamily"/>
    <property type="match status" value="1"/>
</dbReference>
<dbReference type="Gene3D" id="3.30.505.10">
    <property type="entry name" value="SH2 domain"/>
    <property type="match status" value="1"/>
</dbReference>
<dbReference type="InterPro" id="IPR046349">
    <property type="entry name" value="C1-like_sf"/>
</dbReference>
<dbReference type="InterPro" id="IPR035892">
    <property type="entry name" value="C2_domain_sf"/>
</dbReference>
<dbReference type="InterPro" id="IPR002219">
    <property type="entry name" value="PE/DAG-bd"/>
</dbReference>
<dbReference type="InterPro" id="IPR011993">
    <property type="entry name" value="PH-like_dom_sf"/>
</dbReference>
<dbReference type="InterPro" id="IPR029021">
    <property type="entry name" value="Prot-tyrosine_phosphatase-like"/>
</dbReference>
<dbReference type="InterPro" id="IPR013625">
    <property type="entry name" value="PTB"/>
</dbReference>
<dbReference type="InterPro" id="IPR006020">
    <property type="entry name" value="PTB/PI_dom"/>
</dbReference>
<dbReference type="InterPro" id="IPR000980">
    <property type="entry name" value="SH2"/>
</dbReference>
<dbReference type="InterPro" id="IPR036860">
    <property type="entry name" value="SH2_dom_sf"/>
</dbReference>
<dbReference type="InterPro" id="IPR035012">
    <property type="entry name" value="Tensin-like_SH2"/>
</dbReference>
<dbReference type="InterPro" id="IPR014020">
    <property type="entry name" value="Tensin_C2-dom"/>
</dbReference>
<dbReference type="InterPro" id="IPR029023">
    <property type="entry name" value="Tensin_phosphatase"/>
</dbReference>
<dbReference type="InterPro" id="IPR033929">
    <property type="entry name" value="Tensin_PTB"/>
</dbReference>
<dbReference type="InterPro" id="IPR051484">
    <property type="entry name" value="Tensin_PTEN_phosphatase"/>
</dbReference>
<dbReference type="InterPro" id="IPR003595">
    <property type="entry name" value="Tyr_Pase_cat"/>
</dbReference>
<dbReference type="PANTHER" id="PTHR45734">
    <property type="entry name" value="TENSIN"/>
    <property type="match status" value="1"/>
</dbReference>
<dbReference type="PANTHER" id="PTHR45734:SF3">
    <property type="entry name" value="TENSIN-1"/>
    <property type="match status" value="1"/>
</dbReference>
<dbReference type="Pfam" id="PF08416">
    <property type="entry name" value="PTB"/>
    <property type="match status" value="1"/>
</dbReference>
<dbReference type="Pfam" id="PF10409">
    <property type="entry name" value="PTEN_C2"/>
    <property type="match status" value="1"/>
</dbReference>
<dbReference type="Pfam" id="PF00017">
    <property type="entry name" value="SH2"/>
    <property type="match status" value="1"/>
</dbReference>
<dbReference type="SMART" id="SM00462">
    <property type="entry name" value="PTB"/>
    <property type="match status" value="1"/>
</dbReference>
<dbReference type="SMART" id="SM01326">
    <property type="entry name" value="PTEN_C2"/>
    <property type="match status" value="1"/>
</dbReference>
<dbReference type="SMART" id="SM00404">
    <property type="entry name" value="PTPc_motif"/>
    <property type="match status" value="1"/>
</dbReference>
<dbReference type="SMART" id="SM00252">
    <property type="entry name" value="SH2"/>
    <property type="match status" value="1"/>
</dbReference>
<dbReference type="SUPFAM" id="SSF52799">
    <property type="entry name" value="(Phosphotyrosine protein) phosphatases II"/>
    <property type="match status" value="1"/>
</dbReference>
<dbReference type="SUPFAM" id="SSF49562">
    <property type="entry name" value="C2 domain (Calcium/lipid-binding domain, CaLB)"/>
    <property type="match status" value="1"/>
</dbReference>
<dbReference type="SUPFAM" id="SSF57889">
    <property type="entry name" value="Cysteine-rich domain"/>
    <property type="match status" value="1"/>
</dbReference>
<dbReference type="SUPFAM" id="SSF50729">
    <property type="entry name" value="PH domain-like"/>
    <property type="match status" value="1"/>
</dbReference>
<dbReference type="SUPFAM" id="SSF55550">
    <property type="entry name" value="SH2 domain"/>
    <property type="match status" value="1"/>
</dbReference>
<dbReference type="PROSITE" id="PS51182">
    <property type="entry name" value="C2_TENSIN"/>
    <property type="match status" value="1"/>
</dbReference>
<dbReference type="PROSITE" id="PS51181">
    <property type="entry name" value="PPASE_TENSIN"/>
    <property type="match status" value="1"/>
</dbReference>
<dbReference type="PROSITE" id="PS50001">
    <property type="entry name" value="SH2"/>
    <property type="match status" value="1"/>
</dbReference>
<dbReference type="PROSITE" id="PS00479">
    <property type="entry name" value="ZF_DAG_PE_1"/>
    <property type="match status" value="1"/>
</dbReference>
<dbReference type="PROSITE" id="PS50081">
    <property type="entry name" value="ZF_DAG_PE_2"/>
    <property type="match status" value="1"/>
</dbReference>
<sequence>MGCTVSLVCCEALEPLPSCGPQPPGTPPGPARPERCEPGGAAPDPRRRLLLQPEDLEAPKTHHFKVKAFKKVKPCGICRQAITREGCVCKVCSFSCHRKCQAKVAAPCVPPSSHELVPITTETVPKNVVDVGEGDCRVGSSPKNLEEGGSMRVSPSIQPQPQSQPTSLSRNTSVSRAMEDSCELDLVYVTERIIAVSFPSTANEENFRSNLREVAQMLKSKHGGNYLLFNLSEQRPDITKLHAKVLEFGWPDLHTPALEKICSVCKAMDTWLNADPHNVVVLHNKGNRGRIGVVIAAYLHYSNISASADQALDRFAMKRFYEDKIVPIGQPSQRRYVHYFSGLLSGSIKMNNKPLFLHHVIMHGIPNFESKGGCRPFLRIYQAMQPVYTSGIYNIPGDSQASICITIEPGLLLKGDILLKCYHKKFRSPARDVIFRVQFHTCAIHDLGVVFGKEDLDEAFKDDRFPDYGKVEFVFSYGPEKIQGMEHLENGPSVSVDYNTSDPLIRWDSYDNFSGHREDGMEEVVGHTQGPLDGSLYAKVKKKDSLNGSSGPVTTARPALSATPNHVEHTLSVSSDSGNSTASTKTDKTDEPVSGATTAPAALSPQEKKELDRLLSGFGVDREKQGAMYRAQQLRSHPGGGPTVPSPGRHIVPAQVHVNGGALASERETDILDDELPIQDGQSGGSMGTLSSLDGVTNTSESGYPETLSPLTNGLDKPYSTEPVLNGGGYPYEAANRVIPVHSSHSAPIRPSYSAQEGLAGYQREGPHPAWSQQVTSAHCGCDPSGLFRSQSFPDVEPQLPQAPTRGGSSREAVQRGLNSWQQQQPHPPPRQQERSPLQSLARSKPSPQLSAETPVAALPEFPRAASQQEIEQSIETLNMLMLDLEPASAAAPLHKSQSVPGAWPGASPLSSQPLLGSSRQSHPLTQSRSGYIPSGHSLGTPELVSSGRPYSPYDYQLHPAGSNQSFHPKSPASSTFLPSPHSSAGPQEPPASLPGLIAQPQLPPKETTSDPSRTPEEEPLNLEGLVAHRVAGVQARERQPAEPPGPLRRRAASDGQYENQSPEATSPRSPGVRSPVQCVSPELALTIALNPGGRPKEPHLHSYKEAFEEMEGTSPSSPPHSVARSPPGLAKTPLSALGLKPHNPADILLHPTGVARRLIQPEEDEGEEVTKPPEEPRSYVESVARTAVAGPRAQDVEPKSFSAPAAHAYGHETPLRNGTPGGSFVSPSPLSTSSPILSADSTSVGSFPSVVSSDQGPRTPFQPMLDSSIRSGSLGQPSPAALSYQSSSPVPVGGSSYNSPDYSLQPFSSSPESQGQPQYSAASVHMVPGSPQARHRTVGTNTPPSPGFGRRAVNPTMAAPGSPSLSHRQVMGPSGPGFHGNVVSGHPASAATTPGSPSLGRHPVGSHQVPGLHSSVVTTPGSPSLGRHPGAHQGNLASSLHSNAVISPGSPSLGRHLGGSGSVVPGSPSLDRHAAYGGYSTPEDRRPTLSRQSSASGYQAPSTPSFPVSPAYYPGLSSPATSPSPDSAAFRQGSPTPALPEKRRMSVGDRAGSLPNYATINGKVSSSPVANGMASGSSTVSFSHTLPDFSKYSMPDNSPETRAKVKFVQDTSKYWYKPEISREQAIALLKDQEPGAFIIRDSHSFRGAYGLAMKVSSPPPTITQQGKKGDMTHELVRHFLIETGPRGVKLKGCPNEPNFGSLSALVYQHSVIPLALPCKLVIPSRDPTDESKDSSGPANSTTDLLKQGAACNVLFVNSVDMESLTGPQAISKATSETLAADPTPAATIVHFKVSAQGITLTDNQRKLFFRRHYPLNTVTFCDLDPQERKWMKTEGGAPAKLFGFVARKQGSTTDNACHLFAELDPNQPASAIVNFVSKVMLSAGQKR</sequence>
<feature type="chain" id="PRO_0000457045" description="Tensin-1">
    <location>
        <begin position="1"/>
        <end position="1888"/>
    </location>
</feature>
<feature type="domain" description="Phosphatase tensin-type" evidence="6">
    <location>
        <begin position="175"/>
        <end position="347"/>
    </location>
</feature>
<feature type="domain" description="C2 tensin-type" evidence="5">
    <location>
        <begin position="352"/>
        <end position="478"/>
    </location>
</feature>
<feature type="domain" description="SH2" evidence="3">
    <location>
        <begin position="1616"/>
        <end position="1725"/>
    </location>
</feature>
<feature type="domain" description="PTB" evidence="2">
    <location>
        <begin position="1751"/>
        <end position="1885"/>
    </location>
</feature>
<feature type="zinc finger region" description="Phorbol-ester/DAG-type" evidence="4">
    <location>
        <begin position="61"/>
        <end position="108"/>
    </location>
</feature>
<feature type="region of interest" description="Disordered" evidence="7">
    <location>
        <begin position="21"/>
        <end position="45"/>
    </location>
</feature>
<feature type="region of interest" description="Disordered" evidence="7">
    <location>
        <begin position="132"/>
        <end position="174"/>
    </location>
</feature>
<feature type="region of interest" description="Disordered" evidence="7">
    <location>
        <begin position="543"/>
        <end position="608"/>
    </location>
</feature>
<feature type="region of interest" description="Disordered" evidence="7">
    <location>
        <begin position="696"/>
        <end position="722"/>
    </location>
</feature>
<feature type="region of interest" description="Disordered" evidence="7">
    <location>
        <begin position="789"/>
        <end position="854"/>
    </location>
</feature>
<feature type="region of interest" description="Disordered" evidence="7">
    <location>
        <begin position="893"/>
        <end position="1077"/>
    </location>
</feature>
<feature type="region of interest" description="Disordered" evidence="7">
    <location>
        <begin position="1109"/>
        <end position="1555"/>
    </location>
</feature>
<feature type="compositionally biased region" description="Pro residues" evidence="7">
    <location>
        <begin position="21"/>
        <end position="31"/>
    </location>
</feature>
<feature type="compositionally biased region" description="Low complexity" evidence="7">
    <location>
        <begin position="154"/>
        <end position="167"/>
    </location>
</feature>
<feature type="compositionally biased region" description="Polar residues" evidence="7">
    <location>
        <begin position="571"/>
        <end position="584"/>
    </location>
</feature>
<feature type="compositionally biased region" description="Polar residues" evidence="7">
    <location>
        <begin position="835"/>
        <end position="852"/>
    </location>
</feature>
<feature type="compositionally biased region" description="Low complexity" evidence="7">
    <location>
        <begin position="905"/>
        <end position="922"/>
    </location>
</feature>
<feature type="compositionally biased region" description="Polar residues" evidence="7">
    <location>
        <begin position="962"/>
        <end position="986"/>
    </location>
</feature>
<feature type="compositionally biased region" description="Polar residues" evidence="7">
    <location>
        <begin position="1057"/>
        <end position="1069"/>
    </location>
</feature>
<feature type="compositionally biased region" description="Basic and acidic residues" evidence="7">
    <location>
        <begin position="1169"/>
        <end position="1179"/>
    </location>
</feature>
<feature type="compositionally biased region" description="Low complexity" evidence="7">
    <location>
        <begin position="1227"/>
        <end position="1239"/>
    </location>
</feature>
<feature type="compositionally biased region" description="Polar residues" evidence="7">
    <location>
        <begin position="1240"/>
        <end position="1257"/>
    </location>
</feature>
<feature type="compositionally biased region" description="Low complexity" evidence="7">
    <location>
        <begin position="1284"/>
        <end position="1300"/>
    </location>
</feature>
<feature type="compositionally biased region" description="Polar residues" evidence="7">
    <location>
        <begin position="1301"/>
        <end position="1322"/>
    </location>
</feature>
<feature type="compositionally biased region" description="Polar residues" evidence="7">
    <location>
        <begin position="1436"/>
        <end position="1446"/>
    </location>
</feature>
<feature type="compositionally biased region" description="Polar residues" evidence="7">
    <location>
        <begin position="1490"/>
        <end position="1507"/>
    </location>
</feature>
<feature type="compositionally biased region" description="Low complexity" evidence="7">
    <location>
        <begin position="1518"/>
        <end position="1530"/>
    </location>
</feature>
<feature type="modified residue" description="Phosphoserine" evidence="1">
    <location>
        <position position="509"/>
    </location>
</feature>
<feature type="modified residue" description="Phosphoserine" evidence="1">
    <location>
        <position position="535"/>
    </location>
</feature>
<feature type="modified residue" description="Phosphotyrosine" evidence="1">
    <location>
        <position position="537"/>
    </location>
</feature>
<feature type="modified residue" description="Phosphoserine" evidence="1">
    <location>
        <position position="549"/>
    </location>
</feature>
<feature type="modified residue" description="Phosphoserine" evidence="1">
    <location>
        <position position="604"/>
    </location>
</feature>
<feature type="modified residue" description="Phosphoserine" evidence="1">
    <location>
        <position position="792"/>
    </location>
</feature>
<feature type="modified residue" description="Phosphoserine" evidence="1">
    <location>
        <position position="867"/>
    </location>
</feature>
<feature type="modified residue" description="Phosphoserine" evidence="1">
    <location>
        <position position="930"/>
    </location>
</feature>
<feature type="modified residue" description="Phosphoserine" evidence="1">
    <location>
        <position position="935"/>
    </location>
</feature>
<feature type="modified residue" description="Phosphoserine" evidence="1">
    <location>
        <position position="952"/>
    </location>
</feature>
<feature type="modified residue" description="Phosphothreonine" evidence="1">
    <location>
        <position position="1015"/>
    </location>
</feature>
<feature type="modified residue" description="Phosphoserine" evidence="1">
    <location>
        <position position="1054"/>
    </location>
</feature>
<feature type="modified residue" description="Phosphotyrosine" evidence="1">
    <location>
        <position position="1058"/>
    </location>
</feature>
<feature type="modified residue" description="Phosphoserine" evidence="1">
    <location>
        <position position="1062"/>
    </location>
</feature>
<feature type="modified residue" description="Phosphoserine" evidence="1">
    <location>
        <position position="1118"/>
    </location>
</feature>
<feature type="modified residue" description="Phosphoserine" evidence="1">
    <location>
        <position position="1122"/>
    </location>
</feature>
<feature type="modified residue" description="Phosphoserine" evidence="1">
    <location>
        <position position="1279"/>
    </location>
</feature>
<feature type="modified residue" description="Phosphoserine" evidence="1">
    <location>
        <position position="1331"/>
    </location>
</feature>
<feature type="modified residue" description="Phosphothreonine" evidence="1">
    <location>
        <position position="1343"/>
    </location>
</feature>
<feature type="modified residue" description="Phosphoserine" evidence="1">
    <location>
        <position position="1346"/>
    </location>
</feature>
<feature type="modified residue" description="Phosphothreonine" evidence="1">
    <location>
        <position position="1420"/>
    </location>
</feature>
<feature type="modified residue" description="Phosphoserine" evidence="1">
    <location>
        <position position="1423"/>
    </location>
</feature>
<feature type="modified residue" description="Phosphoserine" evidence="1">
    <location>
        <position position="1448"/>
    </location>
</feature>
<feature type="modified residue" description="Phosphoserine" evidence="1">
    <location>
        <position position="1463"/>
    </location>
</feature>
<feature type="modified residue" description="Phosphoserine" evidence="1">
    <location>
        <position position="1468"/>
    </location>
</feature>
<feature type="modified residue" description="Phosphoserine" evidence="1">
    <location>
        <position position="1535"/>
    </location>
</feature>
<feature type="modified residue" description="Phosphoserine" evidence="1">
    <location>
        <position position="1547"/>
    </location>
</feature>
<feature type="modified residue" description="Phosphoserine" evidence="1">
    <location>
        <position position="1554"/>
    </location>
</feature>
<feature type="modified residue" description="Phosphoserine" evidence="1">
    <location>
        <position position="1599"/>
    </location>
</feature>
<feature type="modified residue" description="Phosphoserine" evidence="1">
    <location>
        <position position="1741"/>
    </location>
</feature>
<feature type="glycosylation site" description="O-linked (GalNAc...) serine" evidence="1">
    <location>
        <position position="1321"/>
    </location>
</feature>
<accession>E9Q0S6</accession>
<name>TENS1_MOUSE</name>
<proteinExistence type="evidence at protein level"/>
<reference evidence="11" key="1">
    <citation type="journal article" date="2009" name="PLoS Biol.">
        <title>Lineage-specific biology revealed by a finished genome assembly of the mouse.</title>
        <authorList>
            <person name="Church D.M."/>
            <person name="Goodstadt L."/>
            <person name="Hillier L.W."/>
            <person name="Zody M.C."/>
            <person name="Goldstein S."/>
            <person name="She X."/>
            <person name="Bult C.J."/>
            <person name="Agarwala R."/>
            <person name="Cherry J.L."/>
            <person name="DiCuccio M."/>
            <person name="Hlavina W."/>
            <person name="Kapustin Y."/>
            <person name="Meric P."/>
            <person name="Maglott D."/>
            <person name="Birtle Z."/>
            <person name="Marques A.C."/>
            <person name="Graves T."/>
            <person name="Zhou S."/>
            <person name="Teague B."/>
            <person name="Potamousis K."/>
            <person name="Churas C."/>
            <person name="Place M."/>
            <person name="Herschleb J."/>
            <person name="Runnheim R."/>
            <person name="Forrest D."/>
            <person name="Amos-Landgraf J."/>
            <person name="Schwartz D.C."/>
            <person name="Cheng Z."/>
            <person name="Lindblad-Toh K."/>
            <person name="Eichler E.E."/>
            <person name="Ponting C.P."/>
        </authorList>
    </citation>
    <scope>NUCLEOTIDE SEQUENCE [LARGE SCALE GENOMIC DNA]</scope>
    <source>
        <strain evidence="11">C57BL/6J</strain>
    </source>
</reference>
<reference evidence="12" key="2">
    <citation type="journal article" date="2005" name="Nat. Biotechnol.">
        <title>Immunoaffinity profiling of tyrosine phosphorylation in cancer cells.</title>
        <authorList>
            <person name="Rush J."/>
            <person name="Moritz A."/>
            <person name="Lee K.A."/>
            <person name="Guo A."/>
            <person name="Goss V.L."/>
            <person name="Spek E.J."/>
            <person name="Zhang H."/>
            <person name="Zha X.-M."/>
            <person name="Polakiewicz R.D."/>
            <person name="Comb M.J."/>
        </authorList>
    </citation>
    <scope>IDENTIFICATION BY MASS SPECTROMETRY [LARGE SCALE ANALYSIS]</scope>
</reference>
<reference evidence="13" key="3">
    <citation type="journal article" date="2007" name="Proc. Natl. Acad. Sci. U.S.A.">
        <title>Large-scale phosphorylation analysis of mouse liver.</title>
        <authorList>
            <person name="Villen J."/>
            <person name="Beausoleil S.A."/>
            <person name="Gerber S.A."/>
            <person name="Gygi S.P."/>
        </authorList>
    </citation>
    <scope>IDENTIFICATION BY MASS SPECTROMETRY [LARGE SCALE ANALYSIS]</scope>
</reference>
<reference evidence="14" key="4">
    <citation type="journal article" date="2008" name="J. Proteome Res.">
        <title>Specific phosphopeptide enrichment with immobilized titanium ion affinity chromatography adsorbent for phosphoproteome analysis.</title>
        <authorList>
            <person name="Zhou H."/>
            <person name="Ye M."/>
            <person name="Dong J."/>
            <person name="Han G."/>
            <person name="Jiang X."/>
            <person name="Wu R."/>
            <person name="Zou H."/>
        </authorList>
    </citation>
    <scope>IDENTIFICATION BY MASS SPECTROMETRY [LARGE SCALE ANALYSIS]</scope>
</reference>
<reference evidence="15" key="5">
    <citation type="journal article" date="2009" name="Mol. Cell. Proteomics">
        <title>Large scale localization of protein phosphorylation by use of electron capture dissociation mass spectrometry.</title>
        <authorList>
            <person name="Sweet S.M."/>
            <person name="Bailey C.M."/>
            <person name="Cunningham D.L."/>
            <person name="Heath J.K."/>
            <person name="Cooper H.J."/>
        </authorList>
    </citation>
    <scope>IDENTIFICATION BY MASS SPECTROMETRY [LARGE SCALE ANALYSIS]</scope>
</reference>
<reference evidence="16" key="6">
    <citation type="journal article" date="2010" name="Cell">
        <title>A tissue-specific atlas of mouse protein phosphorylation and expression.</title>
        <authorList>
            <person name="Huttlin E.L."/>
            <person name="Jedrychowski M.P."/>
            <person name="Elias J.E."/>
            <person name="Goswami T."/>
            <person name="Rad R."/>
            <person name="Beausoleil S.A."/>
            <person name="Villen J."/>
            <person name="Haas W."/>
            <person name="Sowa M.E."/>
            <person name="Gygi S.P."/>
        </authorList>
    </citation>
    <scope>IDENTIFICATION BY MASS SPECTROMETRY [LARGE SCALE ANALYSIS]</scope>
</reference>
<reference evidence="9" key="7">
    <citation type="journal article" date="2015" name="Biochim. Biophys. Acta">
        <title>Tensin1 positively regulates RhoA activity through its interaction with DLC1.</title>
        <authorList>
            <person name="Shih Y.P."/>
            <person name="Sun P."/>
            <person name="Wang A."/>
            <person name="Lo S.H."/>
        </authorList>
    </citation>
    <scope>FUNCTION</scope>
    <scope>DISRUPTION PHENOTYPE</scope>
</reference>
<reference evidence="9" key="8">
    <citation type="journal article" date="2018" name="Biochim. Biophys. Acta">
        <authorList>
            <person name="Shih Y.P."/>
            <person name="Sun P."/>
            <person name="Wang A."/>
            <person name="Lo S.H."/>
        </authorList>
    </citation>
    <scope>ERRATUM OF PUBMED:26427649</scope>
</reference>
<comment type="function">
    <text evidence="1 8">May act as a protein phosphatase and/or a lipid phosphatase (By similarity). Involved in fibrillar adhesion formation (By similarity). Essential for myofibroblast differentiation and myofibroblast-mediated extracellular matrix deposition (By similarity). Enhances RHOA activation in the presence of DLC1 (PubMed:26427649). Plays a role in cell polarization and migration (By similarity). May be involved in cartilage development and in linking signal transduction pathways to the cytoskeleton (By similarity).</text>
</comment>
<comment type="subunit">
    <text evidence="1">Binds to actin filaments and interacts with phosphotyrosine-containing proteins. Interacts with STARD8. Interacts with protein phosphatase PPP1CA. Interacts (via N-terminus) with Rho GTPase-activating protein DLC1; the interaction is decreased by phosphorylation of TNS1. Interacts with tyrosine-phosphorylated proteins BCAR1/p130Cas and PTK2/FAK; the interactions are increased by phosphorylation of TNS1.</text>
</comment>
<comment type="subcellular location">
    <subcellularLocation>
        <location evidence="1">Cell surface</location>
    </subcellularLocation>
    <subcellularLocation>
        <location evidence="1">Cell junction</location>
        <location evidence="1">Focal adhesion</location>
    </subcellularLocation>
    <subcellularLocation>
        <location evidence="1">Cytoplasm</location>
        <location evidence="1">Cytoskeleton</location>
    </subcellularLocation>
    <text evidence="1">Localizes to both focal adhesions and fibrillar adhesions. Localized at the cell periphery preferentially to fibrillar adhesions rather than to focal adhesions. Translocates from the cell edge to the cell center in an ITGB1BP1-dependent manner.</text>
</comment>
<comment type="PTM">
    <text evidence="1">Extensively phosphorylated on serine and threonine residues in a p38 MAPK-dependent manner which reduces interaction with DLC1 and increases interaction with tyrosine-phosphorylated proteins including BCAR1/p130cas and PTK2/FAK. The majority of the phosphorylated Ser/Thr residues are immediately adjacent to a proline residue. Also phosphorylated on tyrosine residues.</text>
</comment>
<comment type="PTM">
    <text evidence="1">Rapidly cleaved by calpain II.</text>
</comment>
<comment type="disruption phenotype">
    <text evidence="8">Reduced RHOA activity, reduced endothelial cell proliferation and migration, reduced endothelial cell tube formation and reduced angiogenesis.</text>
</comment>
<comment type="similarity">
    <text evidence="9">Belongs to the PTEN phosphatase protein family.</text>
</comment>
<protein>
    <recommendedName>
        <fullName evidence="10">Tensin-1</fullName>
        <ecNumber evidence="9">3.1.3.-</ecNumber>
    </recommendedName>
</protein>
<evidence type="ECO:0000250" key="1">
    <source>
        <dbReference type="UniProtKB" id="Q9HBL0"/>
    </source>
</evidence>
<evidence type="ECO:0000255" key="2"/>
<evidence type="ECO:0000255" key="3">
    <source>
        <dbReference type="PROSITE-ProRule" id="PRU00191"/>
    </source>
</evidence>
<evidence type="ECO:0000255" key="4">
    <source>
        <dbReference type="PROSITE-ProRule" id="PRU00226"/>
    </source>
</evidence>
<evidence type="ECO:0000255" key="5">
    <source>
        <dbReference type="PROSITE-ProRule" id="PRU00589"/>
    </source>
</evidence>
<evidence type="ECO:0000255" key="6">
    <source>
        <dbReference type="PROSITE-ProRule" id="PRU00590"/>
    </source>
</evidence>
<evidence type="ECO:0000256" key="7">
    <source>
        <dbReference type="SAM" id="MobiDB-lite"/>
    </source>
</evidence>
<evidence type="ECO:0000269" key="8">
    <source>
    </source>
</evidence>
<evidence type="ECO:0000305" key="9"/>
<evidence type="ECO:0000312" key="10">
    <source>
        <dbReference type="MGI" id="MGI:104552"/>
    </source>
</evidence>
<evidence type="ECO:0000312" key="11">
    <source>
        <dbReference type="Proteomes" id="UP000000589"/>
    </source>
</evidence>
<evidence type="ECO:0007744" key="12">
    <source>
    </source>
</evidence>
<evidence type="ECO:0007744" key="13">
    <source>
    </source>
</evidence>
<evidence type="ECO:0007744" key="14">
    <source>
    </source>
</evidence>
<evidence type="ECO:0007744" key="15">
    <source>
    </source>
</evidence>
<evidence type="ECO:0007744" key="16">
    <source>
    </source>
</evidence>
<organism evidence="11">
    <name type="scientific">Mus musculus</name>
    <name type="common">Mouse</name>
    <dbReference type="NCBI Taxonomy" id="10090"/>
    <lineage>
        <taxon>Eukaryota</taxon>
        <taxon>Metazoa</taxon>
        <taxon>Chordata</taxon>
        <taxon>Craniata</taxon>
        <taxon>Vertebrata</taxon>
        <taxon>Euteleostomi</taxon>
        <taxon>Mammalia</taxon>
        <taxon>Eutheria</taxon>
        <taxon>Euarchontoglires</taxon>
        <taxon>Glires</taxon>
        <taxon>Rodentia</taxon>
        <taxon>Myomorpha</taxon>
        <taxon>Muroidea</taxon>
        <taxon>Muridae</taxon>
        <taxon>Murinae</taxon>
        <taxon>Mus</taxon>
        <taxon>Mus</taxon>
    </lineage>
</organism>
<gene>
    <name evidence="10" type="primary">Tns1</name>
</gene>